<sequence length="279" mass="30643">MPEKPVLIAGPTASGKSALALRIAAEQGGVIVNADASQGYDCWRVLTARPAPDEERQTPHALYGHLNAKVRYSAGHWLRDVMPYLAGEARPIIVGGTGLYFTALTRGLADIPPTPAEIRAKGDRLERAEMLAALDARTRDRIDNANRARVQRAWEVQMATGRGLAAWQDETGAPALPLSAAQAIVFDVDKEVLNARIEKRFDLMLAAGALEEARRVLPDYDPTLPAHRAIGAPELIAHLKGQISLEAAREAAITATRQYAKRQRTWFRSKMRHWSAYMP</sequence>
<proteinExistence type="inferred from homology"/>
<organism>
    <name type="scientific">Roseobacter denitrificans (strain ATCC 33942 / OCh 114)</name>
    <name type="common">Erythrobacter sp. (strain OCh 114)</name>
    <name type="synonym">Roseobacter denitrificans</name>
    <dbReference type="NCBI Taxonomy" id="375451"/>
    <lineage>
        <taxon>Bacteria</taxon>
        <taxon>Pseudomonadati</taxon>
        <taxon>Pseudomonadota</taxon>
        <taxon>Alphaproteobacteria</taxon>
        <taxon>Rhodobacterales</taxon>
        <taxon>Roseobacteraceae</taxon>
        <taxon>Roseobacter</taxon>
    </lineage>
</organism>
<evidence type="ECO:0000255" key="1">
    <source>
        <dbReference type="HAMAP-Rule" id="MF_00185"/>
    </source>
</evidence>
<gene>
    <name evidence="1" type="primary">miaA</name>
    <name type="ordered locus">RD1_2584</name>
</gene>
<dbReference type="EC" id="2.5.1.75" evidence="1"/>
<dbReference type="EMBL" id="CP000362">
    <property type="protein sequence ID" value="ABG32136.1"/>
    <property type="molecule type" value="Genomic_DNA"/>
</dbReference>
<dbReference type="SMR" id="Q166F7"/>
<dbReference type="STRING" id="375451.RD1_2584"/>
<dbReference type="KEGG" id="rde:RD1_2584"/>
<dbReference type="eggNOG" id="COG0324">
    <property type="taxonomic scope" value="Bacteria"/>
</dbReference>
<dbReference type="HOGENOM" id="CLU_032616_0_1_5"/>
<dbReference type="Proteomes" id="UP000007029">
    <property type="component" value="Chromosome"/>
</dbReference>
<dbReference type="GO" id="GO:0005524">
    <property type="term" value="F:ATP binding"/>
    <property type="evidence" value="ECO:0007669"/>
    <property type="project" value="UniProtKB-UniRule"/>
</dbReference>
<dbReference type="GO" id="GO:0052381">
    <property type="term" value="F:tRNA dimethylallyltransferase activity"/>
    <property type="evidence" value="ECO:0007669"/>
    <property type="project" value="UniProtKB-UniRule"/>
</dbReference>
<dbReference type="GO" id="GO:0006400">
    <property type="term" value="P:tRNA modification"/>
    <property type="evidence" value="ECO:0007669"/>
    <property type="project" value="TreeGrafter"/>
</dbReference>
<dbReference type="CDD" id="cd02019">
    <property type="entry name" value="NK"/>
    <property type="match status" value="1"/>
</dbReference>
<dbReference type="Gene3D" id="1.10.20.140">
    <property type="match status" value="1"/>
</dbReference>
<dbReference type="Gene3D" id="3.40.50.300">
    <property type="entry name" value="P-loop containing nucleotide triphosphate hydrolases"/>
    <property type="match status" value="1"/>
</dbReference>
<dbReference type="HAMAP" id="MF_00185">
    <property type="entry name" value="IPP_trans"/>
    <property type="match status" value="1"/>
</dbReference>
<dbReference type="InterPro" id="IPR039657">
    <property type="entry name" value="Dimethylallyltransferase"/>
</dbReference>
<dbReference type="InterPro" id="IPR018022">
    <property type="entry name" value="IPT"/>
</dbReference>
<dbReference type="InterPro" id="IPR027417">
    <property type="entry name" value="P-loop_NTPase"/>
</dbReference>
<dbReference type="NCBIfam" id="TIGR00174">
    <property type="entry name" value="miaA"/>
    <property type="match status" value="1"/>
</dbReference>
<dbReference type="PANTHER" id="PTHR11088">
    <property type="entry name" value="TRNA DIMETHYLALLYLTRANSFERASE"/>
    <property type="match status" value="1"/>
</dbReference>
<dbReference type="PANTHER" id="PTHR11088:SF60">
    <property type="entry name" value="TRNA DIMETHYLALLYLTRANSFERASE"/>
    <property type="match status" value="1"/>
</dbReference>
<dbReference type="Pfam" id="PF01715">
    <property type="entry name" value="IPPT"/>
    <property type="match status" value="1"/>
</dbReference>
<dbReference type="SUPFAM" id="SSF52540">
    <property type="entry name" value="P-loop containing nucleoside triphosphate hydrolases"/>
    <property type="match status" value="1"/>
</dbReference>
<protein>
    <recommendedName>
        <fullName evidence="1">tRNA dimethylallyltransferase</fullName>
        <ecNumber evidence="1">2.5.1.75</ecNumber>
    </recommendedName>
    <alternativeName>
        <fullName evidence="1">Dimethylallyl diphosphate:tRNA dimethylallyltransferase</fullName>
        <shortName evidence="1">DMAPP:tRNA dimethylallyltransferase</shortName>
        <shortName evidence="1">DMATase</shortName>
    </alternativeName>
    <alternativeName>
        <fullName evidence="1">Isopentenyl-diphosphate:tRNA isopentenyltransferase</fullName>
        <shortName evidence="1">IPP transferase</shortName>
        <shortName evidence="1">IPPT</shortName>
        <shortName evidence="1">IPTase</shortName>
    </alternativeName>
</protein>
<accession>Q166F7</accession>
<comment type="function">
    <text evidence="1">Catalyzes the transfer of a dimethylallyl group onto the adenine at position 37 in tRNAs that read codons beginning with uridine, leading to the formation of N6-(dimethylallyl)adenosine (i(6)A).</text>
</comment>
<comment type="catalytic activity">
    <reaction evidence="1">
        <text>adenosine(37) in tRNA + dimethylallyl diphosphate = N(6)-dimethylallyladenosine(37) in tRNA + diphosphate</text>
        <dbReference type="Rhea" id="RHEA:26482"/>
        <dbReference type="Rhea" id="RHEA-COMP:10162"/>
        <dbReference type="Rhea" id="RHEA-COMP:10375"/>
        <dbReference type="ChEBI" id="CHEBI:33019"/>
        <dbReference type="ChEBI" id="CHEBI:57623"/>
        <dbReference type="ChEBI" id="CHEBI:74411"/>
        <dbReference type="ChEBI" id="CHEBI:74415"/>
        <dbReference type="EC" id="2.5.1.75"/>
    </reaction>
</comment>
<comment type="cofactor">
    <cofactor evidence="1">
        <name>Mg(2+)</name>
        <dbReference type="ChEBI" id="CHEBI:18420"/>
    </cofactor>
</comment>
<comment type="subunit">
    <text evidence="1">Monomer.</text>
</comment>
<comment type="similarity">
    <text evidence="1">Belongs to the IPP transferase family.</text>
</comment>
<name>MIAA_ROSDO</name>
<feature type="chain" id="PRO_0000377298" description="tRNA dimethylallyltransferase">
    <location>
        <begin position="1"/>
        <end position="279"/>
    </location>
</feature>
<feature type="binding site" evidence="1">
    <location>
        <begin position="10"/>
        <end position="17"/>
    </location>
    <ligand>
        <name>ATP</name>
        <dbReference type="ChEBI" id="CHEBI:30616"/>
    </ligand>
</feature>
<feature type="binding site" evidence="1">
    <location>
        <begin position="12"/>
        <end position="17"/>
    </location>
    <ligand>
        <name>substrate</name>
    </ligand>
</feature>
<feature type="site" description="Interaction with substrate tRNA" evidence="1">
    <location>
        <position position="97"/>
    </location>
</feature>
<reference key="1">
    <citation type="journal article" date="2007" name="J. Bacteriol.">
        <title>The complete genome sequence of Roseobacter denitrificans reveals a mixotrophic rather than photosynthetic metabolism.</title>
        <authorList>
            <person name="Swingley W.D."/>
            <person name="Sadekar S."/>
            <person name="Mastrian S.D."/>
            <person name="Matthies H.J."/>
            <person name="Hao J."/>
            <person name="Ramos H."/>
            <person name="Acharya C.R."/>
            <person name="Conrad A.L."/>
            <person name="Taylor H.L."/>
            <person name="Dejesa L.C."/>
            <person name="Shah M.K."/>
            <person name="O'Huallachain M.E."/>
            <person name="Lince M.T."/>
            <person name="Blankenship R.E."/>
            <person name="Beatty J.T."/>
            <person name="Touchman J.W."/>
        </authorList>
    </citation>
    <scope>NUCLEOTIDE SEQUENCE [LARGE SCALE GENOMIC DNA]</scope>
    <source>
        <strain>ATCC 33942 / OCh 114</strain>
    </source>
</reference>
<keyword id="KW-0067">ATP-binding</keyword>
<keyword id="KW-0460">Magnesium</keyword>
<keyword id="KW-0547">Nucleotide-binding</keyword>
<keyword id="KW-1185">Reference proteome</keyword>
<keyword id="KW-0808">Transferase</keyword>
<keyword id="KW-0819">tRNA processing</keyword>